<comment type="function">
    <text>Receptor for ATP and UTP coupled to G-proteins that activate a phosphatidylinositol-calcium second messenger system. The affinity range is UTP = ATP &gt; ATP-gamma-S &gt;&gt; 2-methylthio-ATP = ADP.</text>
</comment>
<comment type="interaction">
    <interactant intactId="EBI-8677294">
        <id>P41231</id>
    </interactant>
    <interactant intactId="EBI-2837444">
        <id>Q8WUW1</id>
        <label>BRK1</label>
    </interactant>
    <organismsDiffer>false</organismsDiffer>
    <experiments>3</experiments>
</comment>
<comment type="subcellular location">
    <subcellularLocation>
        <location>Cell membrane</location>
        <topology>Multi-pass membrane protein</topology>
    </subcellularLocation>
</comment>
<comment type="tissue specificity">
    <text>Spleen, testis, kidney, liver, lung, heart and brain.</text>
</comment>
<comment type="similarity">
    <text evidence="2">Belongs to the G-protein coupled receptor 1 family.</text>
</comment>
<dbReference type="EMBL" id="U07225">
    <property type="protein sequence ID" value="AAC04923.1"/>
    <property type="molecule type" value="mRNA"/>
</dbReference>
<dbReference type="EMBL" id="AY136753">
    <property type="protein sequence ID" value="AAN01279.1"/>
    <property type="molecule type" value="mRNA"/>
</dbReference>
<dbReference type="EMBL" id="AK313942">
    <property type="protein sequence ID" value="BAG36660.1"/>
    <property type="molecule type" value="mRNA"/>
</dbReference>
<dbReference type="EMBL" id="AP002761">
    <property type="status" value="NOT_ANNOTATED_CDS"/>
    <property type="molecule type" value="Genomic_DNA"/>
</dbReference>
<dbReference type="EMBL" id="CH471076">
    <property type="protein sequence ID" value="EAW74882.1"/>
    <property type="molecule type" value="Genomic_DNA"/>
</dbReference>
<dbReference type="EMBL" id="BC012104">
    <property type="protein sequence ID" value="AAH12104.1"/>
    <property type="molecule type" value="mRNA"/>
</dbReference>
<dbReference type="EMBL" id="BC028135">
    <property type="protein sequence ID" value="AAH28135.1"/>
    <property type="molecule type" value="mRNA"/>
</dbReference>
<dbReference type="CCDS" id="CCDS8219.1"/>
<dbReference type="PIR" id="A54946">
    <property type="entry name" value="A54946"/>
</dbReference>
<dbReference type="RefSeq" id="NP_002555.3">
    <property type="nucleotide sequence ID" value="NM_002564.3"/>
</dbReference>
<dbReference type="RefSeq" id="NP_788085.3">
    <property type="nucleotide sequence ID" value="NM_176071.3"/>
</dbReference>
<dbReference type="RefSeq" id="NP_788086.3">
    <property type="nucleotide sequence ID" value="NM_176072.3"/>
</dbReference>
<dbReference type="RefSeq" id="XP_005274076.1">
    <property type="nucleotide sequence ID" value="XM_005274019.4"/>
</dbReference>
<dbReference type="RefSeq" id="XP_005274077.1">
    <property type="nucleotide sequence ID" value="XM_005274020.4"/>
</dbReference>
<dbReference type="RefSeq" id="XP_005274078.1">
    <property type="nucleotide sequence ID" value="XM_005274021.4"/>
</dbReference>
<dbReference type="RefSeq" id="XP_011543376.1">
    <property type="nucleotide sequence ID" value="XM_011545074.2"/>
</dbReference>
<dbReference type="RefSeq" id="XP_016873328.1">
    <property type="nucleotide sequence ID" value="XM_017017839.1"/>
</dbReference>
<dbReference type="SMR" id="P41231"/>
<dbReference type="BioGRID" id="111068">
    <property type="interactions" value="117"/>
</dbReference>
<dbReference type="CORUM" id="P41231"/>
<dbReference type="FunCoup" id="P41231">
    <property type="interactions" value="914"/>
</dbReference>
<dbReference type="IntAct" id="P41231">
    <property type="interactions" value="102"/>
</dbReference>
<dbReference type="MINT" id="P41231"/>
<dbReference type="STRING" id="9606.ENSP00000310305"/>
<dbReference type="BindingDB" id="P41231"/>
<dbReference type="ChEMBL" id="CHEMBL4398"/>
<dbReference type="DrugBank" id="DB04983">
    <property type="generic name" value="Denufosol"/>
</dbReference>
<dbReference type="DrugBank" id="DB15919">
    <property type="generic name" value="Diquafosol"/>
</dbReference>
<dbReference type="DrugBank" id="DB05390">
    <property type="generic name" value="INS 316"/>
</dbReference>
<dbReference type="DrugBank" id="DB01069">
    <property type="generic name" value="Promethazine"/>
</dbReference>
<dbReference type="DrugBank" id="DB04786">
    <property type="generic name" value="Suramin"/>
</dbReference>
<dbReference type="DrugBank" id="DB04005">
    <property type="generic name" value="Uridine 5'-triphosphate"/>
</dbReference>
<dbReference type="DrugCentral" id="P41231"/>
<dbReference type="GuidetoPHARMACOLOGY" id="324"/>
<dbReference type="TCDB" id="9.A.14.13.16">
    <property type="family name" value="the g-protein-coupled receptor (gpcr) family"/>
</dbReference>
<dbReference type="GlyCosmos" id="P41231">
    <property type="glycosylation" value="2 sites, No reported glycans"/>
</dbReference>
<dbReference type="GlyGen" id="P41231">
    <property type="glycosylation" value="3 sites"/>
</dbReference>
<dbReference type="iPTMnet" id="P41231"/>
<dbReference type="PhosphoSitePlus" id="P41231"/>
<dbReference type="SwissPalm" id="P41231"/>
<dbReference type="BioMuta" id="P2RY2"/>
<dbReference type="DMDM" id="311033490"/>
<dbReference type="MassIVE" id="P41231"/>
<dbReference type="PaxDb" id="9606-ENSP00000310305"/>
<dbReference type="PeptideAtlas" id="P41231"/>
<dbReference type="ProteomicsDB" id="55440"/>
<dbReference type="Antibodypedia" id="17116">
    <property type="antibodies" value="301 antibodies from 31 providers"/>
</dbReference>
<dbReference type="DNASU" id="5029"/>
<dbReference type="Ensembl" id="ENST00000311131.6">
    <property type="protein sequence ID" value="ENSP00000310305.2"/>
    <property type="gene ID" value="ENSG00000175591.12"/>
</dbReference>
<dbReference type="Ensembl" id="ENST00000393596.2">
    <property type="protein sequence ID" value="ENSP00000377221.2"/>
    <property type="gene ID" value="ENSG00000175591.12"/>
</dbReference>
<dbReference type="Ensembl" id="ENST00000393597.7">
    <property type="protein sequence ID" value="ENSP00000377222.2"/>
    <property type="gene ID" value="ENSG00000175591.12"/>
</dbReference>
<dbReference type="GeneID" id="5029"/>
<dbReference type="KEGG" id="hsa:5029"/>
<dbReference type="MANE-Select" id="ENST00000393597.7">
    <property type="protein sequence ID" value="ENSP00000377222.2"/>
    <property type="RefSeq nucleotide sequence ID" value="NM_002564.4"/>
    <property type="RefSeq protein sequence ID" value="NP_002555.4"/>
</dbReference>
<dbReference type="UCSC" id="uc001otj.5">
    <property type="organism name" value="human"/>
</dbReference>
<dbReference type="AGR" id="HGNC:8541"/>
<dbReference type="CTD" id="5029"/>
<dbReference type="DisGeNET" id="5029"/>
<dbReference type="GeneCards" id="P2RY2"/>
<dbReference type="HGNC" id="HGNC:8541">
    <property type="gene designation" value="P2RY2"/>
</dbReference>
<dbReference type="HPA" id="ENSG00000175591">
    <property type="expression patterns" value="Tissue enhanced (esophagus, skeletal muscle, tongue)"/>
</dbReference>
<dbReference type="MIM" id="600041">
    <property type="type" value="gene"/>
</dbReference>
<dbReference type="neXtProt" id="NX_P41231"/>
<dbReference type="OpenTargets" id="ENSG00000175591"/>
<dbReference type="PharmGKB" id="PA32870"/>
<dbReference type="VEuPathDB" id="HostDB:ENSG00000175591"/>
<dbReference type="eggNOG" id="ENOG502QSTF">
    <property type="taxonomic scope" value="Eukaryota"/>
</dbReference>
<dbReference type="GeneTree" id="ENSGT01030000234621"/>
<dbReference type="HOGENOM" id="CLU_009579_8_2_1"/>
<dbReference type="InParanoid" id="P41231"/>
<dbReference type="OMA" id="RFLGICF"/>
<dbReference type="OrthoDB" id="10018446at2759"/>
<dbReference type="PAN-GO" id="P41231">
    <property type="GO annotations" value="4 GO annotations based on evolutionary models"/>
</dbReference>
<dbReference type="PhylomeDB" id="P41231"/>
<dbReference type="TreeFam" id="TF350009"/>
<dbReference type="PathwayCommons" id="P41231"/>
<dbReference type="Reactome" id="R-HSA-416476">
    <property type="pathway name" value="G alpha (q) signalling events"/>
</dbReference>
<dbReference type="Reactome" id="R-HSA-417957">
    <property type="pathway name" value="P2Y receptors"/>
</dbReference>
<dbReference type="Reactome" id="R-HSA-5683826">
    <property type="pathway name" value="Surfactant metabolism"/>
</dbReference>
<dbReference type="Reactome" id="R-HSA-9856530">
    <property type="pathway name" value="High laminar flow shear stress activates signaling by PIEZO1 and PECAM1:CDH5:KDR in endothelial cells"/>
</dbReference>
<dbReference type="SignaLink" id="P41231"/>
<dbReference type="SIGNOR" id="P41231"/>
<dbReference type="BioGRID-ORCS" id="5029">
    <property type="hits" value="17 hits in 1156 CRISPR screens"/>
</dbReference>
<dbReference type="ChiTaRS" id="P2RY2">
    <property type="organism name" value="human"/>
</dbReference>
<dbReference type="GeneWiki" id="P2RY2"/>
<dbReference type="GenomeRNAi" id="5029"/>
<dbReference type="Pharos" id="P41231">
    <property type="development level" value="Tclin"/>
</dbReference>
<dbReference type="PRO" id="PR:P41231"/>
<dbReference type="Proteomes" id="UP000005640">
    <property type="component" value="Chromosome 11"/>
</dbReference>
<dbReference type="RNAct" id="P41231">
    <property type="molecule type" value="protein"/>
</dbReference>
<dbReference type="Bgee" id="ENSG00000175591">
    <property type="expression patterns" value="Expressed in hindlimb stylopod muscle and 121 other cell types or tissues"/>
</dbReference>
<dbReference type="GO" id="GO:0005886">
    <property type="term" value="C:plasma membrane"/>
    <property type="evidence" value="ECO:0000318"/>
    <property type="project" value="GO_Central"/>
</dbReference>
<dbReference type="GO" id="GO:0031686">
    <property type="term" value="F:A1 adenosine receptor binding"/>
    <property type="evidence" value="ECO:0000250"/>
    <property type="project" value="BHF-UCL"/>
</dbReference>
<dbReference type="GO" id="GO:0045028">
    <property type="term" value="F:G protein-coupled purinergic nucleotide receptor activity"/>
    <property type="evidence" value="ECO:0007669"/>
    <property type="project" value="InterPro"/>
</dbReference>
<dbReference type="GO" id="GO:0045030">
    <property type="term" value="F:G protein-coupled UTP receptor activity"/>
    <property type="evidence" value="ECO:0000318"/>
    <property type="project" value="GO_Central"/>
</dbReference>
<dbReference type="GO" id="GO:0038023">
    <property type="term" value="F:signaling receptor activity"/>
    <property type="evidence" value="ECO:0000304"/>
    <property type="project" value="ProtInc"/>
</dbReference>
<dbReference type="GO" id="GO:0097746">
    <property type="term" value="P:blood vessel diameter maintenance"/>
    <property type="evidence" value="ECO:0007669"/>
    <property type="project" value="InterPro"/>
</dbReference>
<dbReference type="GO" id="GO:0071318">
    <property type="term" value="P:cellular response to ATP"/>
    <property type="evidence" value="ECO:0000304"/>
    <property type="project" value="ARUK-UCL"/>
</dbReference>
<dbReference type="GO" id="GO:0035589">
    <property type="term" value="P:G protein-coupled purinergic nucleotide receptor signaling pathway"/>
    <property type="evidence" value="ECO:0000250"/>
    <property type="project" value="BHF-UCL"/>
</dbReference>
<dbReference type="GO" id="GO:0007186">
    <property type="term" value="P:G protein-coupled receptor signaling pathway"/>
    <property type="evidence" value="ECO:0000318"/>
    <property type="project" value="GO_Central"/>
</dbReference>
<dbReference type="GO" id="GO:0006873">
    <property type="term" value="P:intracellular monoatomic ion homeostasis"/>
    <property type="evidence" value="ECO:0000304"/>
    <property type="project" value="ProtInc"/>
</dbReference>
<dbReference type="GO" id="GO:0007200">
    <property type="term" value="P:phospholipase C-activating G protein-coupled receptor signaling pathway"/>
    <property type="evidence" value="ECO:0000304"/>
    <property type="project" value="ProtInc"/>
</dbReference>
<dbReference type="GO" id="GO:0070257">
    <property type="term" value="P:positive regulation of mucus secretion"/>
    <property type="evidence" value="ECO:0007669"/>
    <property type="project" value="InterPro"/>
</dbReference>
<dbReference type="CDD" id="cd15373">
    <property type="entry name" value="7tmA_P2Y2"/>
    <property type="match status" value="1"/>
</dbReference>
<dbReference type="FunFam" id="1.20.1070.10:FF:000017">
    <property type="entry name" value="lysophosphatidic acid receptor 4"/>
    <property type="match status" value="1"/>
</dbReference>
<dbReference type="Gene3D" id="1.20.1070.10">
    <property type="entry name" value="Rhodopsin 7-helix transmembrane proteins"/>
    <property type="match status" value="1"/>
</dbReference>
<dbReference type="InterPro" id="IPR000276">
    <property type="entry name" value="GPCR_Rhodpsn"/>
</dbReference>
<dbReference type="InterPro" id="IPR017452">
    <property type="entry name" value="GPCR_Rhodpsn_7TM"/>
</dbReference>
<dbReference type="InterPro" id="IPR000356">
    <property type="entry name" value="P2Y2_rcpt"/>
</dbReference>
<dbReference type="PANTHER" id="PTHR24231:SF17">
    <property type="entry name" value="P2Y PURINOCEPTOR 2"/>
    <property type="match status" value="1"/>
</dbReference>
<dbReference type="PANTHER" id="PTHR24231">
    <property type="entry name" value="PURINOCEPTOR-RELATED G-PROTEIN COUPLED RECEPTOR"/>
    <property type="match status" value="1"/>
</dbReference>
<dbReference type="Pfam" id="PF00001">
    <property type="entry name" value="7tm_1"/>
    <property type="match status" value="1"/>
</dbReference>
<dbReference type="PRINTS" id="PR00237">
    <property type="entry name" value="GPCRRHODOPSN"/>
</dbReference>
<dbReference type="PRINTS" id="PR00594">
    <property type="entry name" value="P2Y2PRNOCPTR"/>
</dbReference>
<dbReference type="PRINTS" id="PR01157">
    <property type="entry name" value="P2YPURNOCPTR"/>
</dbReference>
<dbReference type="SUPFAM" id="SSF81321">
    <property type="entry name" value="Family A G protein-coupled receptor-like"/>
    <property type="match status" value="1"/>
</dbReference>
<dbReference type="PROSITE" id="PS00237">
    <property type="entry name" value="G_PROTEIN_RECEP_F1_1"/>
    <property type="match status" value="1"/>
</dbReference>
<dbReference type="PROSITE" id="PS50262">
    <property type="entry name" value="G_PROTEIN_RECEP_F1_2"/>
    <property type="match status" value="1"/>
</dbReference>
<accession>P41231</accession>
<accession>B2R9W3</accession>
<accession>Q96EM8</accession>
<evidence type="ECO:0000255" key="1"/>
<evidence type="ECO:0000255" key="2">
    <source>
        <dbReference type="PROSITE-ProRule" id="PRU00521"/>
    </source>
</evidence>
<evidence type="ECO:0000256" key="3">
    <source>
        <dbReference type="SAM" id="MobiDB-lite"/>
    </source>
</evidence>
<evidence type="ECO:0000269" key="4">
    <source>
    </source>
</evidence>
<evidence type="ECO:0000269" key="5">
    <source>
    </source>
</evidence>
<evidence type="ECO:0000269" key="6">
    <source>
    </source>
</evidence>
<evidence type="ECO:0000269" key="7">
    <source ref="3"/>
</evidence>
<evidence type="ECO:0000269" key="8">
    <source ref="6"/>
</evidence>
<evidence type="ECO:0000305" key="9"/>
<organism>
    <name type="scientific">Homo sapiens</name>
    <name type="common">Human</name>
    <dbReference type="NCBI Taxonomy" id="9606"/>
    <lineage>
        <taxon>Eukaryota</taxon>
        <taxon>Metazoa</taxon>
        <taxon>Chordata</taxon>
        <taxon>Craniata</taxon>
        <taxon>Vertebrata</taxon>
        <taxon>Euteleostomi</taxon>
        <taxon>Mammalia</taxon>
        <taxon>Eutheria</taxon>
        <taxon>Euarchontoglires</taxon>
        <taxon>Primates</taxon>
        <taxon>Haplorrhini</taxon>
        <taxon>Catarrhini</taxon>
        <taxon>Hominidae</taxon>
        <taxon>Homo</taxon>
    </lineage>
</organism>
<protein>
    <recommendedName>
        <fullName>P2Y purinoceptor 2</fullName>
        <shortName>P2Y2</shortName>
    </recommendedName>
    <alternativeName>
        <fullName>ATP receptor</fullName>
    </alternativeName>
    <alternativeName>
        <fullName>P2U purinoceptor 1</fullName>
        <shortName>P2U1</shortName>
    </alternativeName>
    <alternativeName>
        <fullName>P2U receptor 1</fullName>
    </alternativeName>
    <alternativeName>
        <fullName>Purinergic receptor</fullName>
    </alternativeName>
</protein>
<reference key="1">
    <citation type="journal article" date="1994" name="Proc. Natl. Acad. Sci. U.S.A.">
        <title>Cloning and expression of a human P2U nucleotide receptor, a target for cystic fibrosis pharmacotherapy.</title>
        <authorList>
            <person name="Parr C.E."/>
            <person name="Sullivan D.M."/>
            <person name="Paradiso A.M."/>
            <person name="Lazarowski E.R."/>
            <person name="Burch L.H."/>
            <person name="Olsen J.C."/>
            <person name="Erb L."/>
            <person name="Weisman G.A."/>
            <person name="Boucher R.C."/>
            <person name="Turner J.T."/>
        </authorList>
    </citation>
    <scope>NUCLEOTIDE SEQUENCE [MRNA]</scope>
    <scope>VARIANT LEU-46</scope>
    <source>
        <tissue>Airway epithelium</tissue>
    </source>
</reference>
<reference key="2">
    <citation type="journal article" date="1994" name="Proc. Natl. Acad. Sci. U.S.A.">
        <title>Cloning and expression of a human P2U nucleotide receptor, a target for cystic fibrosis pharmacotherapy.</title>
        <authorList>
            <person name="Parr C.E."/>
            <person name="Sullivan D.M."/>
            <person name="Paradiso A.M."/>
            <person name="Lazarowski E.R."/>
            <person name="Burch L.H."/>
            <person name="Olsen J.C."/>
            <person name="Erb L."/>
            <person name="Weisman G.A."/>
            <person name="Boucher R.C."/>
            <person name="Turner J.T."/>
        </authorList>
    </citation>
    <scope>SEQUENCE REVISION</scope>
</reference>
<reference key="3">
    <citation type="submission" date="2002-07" db="EMBL/GenBank/DDBJ databases">
        <title>cDNA clones of human proteins involved in signal transduction sequenced by the Guthrie cDNA resource center (www.cdna.org).</title>
        <authorList>
            <person name="Puhl H.L. III"/>
            <person name="Ikeda S.R."/>
            <person name="Aronstam R.S."/>
        </authorList>
    </citation>
    <scope>NUCLEOTIDE SEQUENCE [LARGE SCALE MRNA]</scope>
    <scope>VARIANT LEU-46</scope>
    <source>
        <tissue>Placenta</tissue>
    </source>
</reference>
<reference key="4">
    <citation type="journal article" date="2004" name="Nat. Genet.">
        <title>Complete sequencing and characterization of 21,243 full-length human cDNAs.</title>
        <authorList>
            <person name="Ota T."/>
            <person name="Suzuki Y."/>
            <person name="Nishikawa T."/>
            <person name="Otsuki T."/>
            <person name="Sugiyama T."/>
            <person name="Irie R."/>
            <person name="Wakamatsu A."/>
            <person name="Hayashi K."/>
            <person name="Sato H."/>
            <person name="Nagai K."/>
            <person name="Kimura K."/>
            <person name="Makita H."/>
            <person name="Sekine M."/>
            <person name="Obayashi M."/>
            <person name="Nishi T."/>
            <person name="Shibahara T."/>
            <person name="Tanaka T."/>
            <person name="Ishii S."/>
            <person name="Yamamoto J."/>
            <person name="Saito K."/>
            <person name="Kawai Y."/>
            <person name="Isono Y."/>
            <person name="Nakamura Y."/>
            <person name="Nagahari K."/>
            <person name="Murakami K."/>
            <person name="Yasuda T."/>
            <person name="Iwayanagi T."/>
            <person name="Wagatsuma M."/>
            <person name="Shiratori A."/>
            <person name="Sudo H."/>
            <person name="Hosoiri T."/>
            <person name="Kaku Y."/>
            <person name="Kodaira H."/>
            <person name="Kondo H."/>
            <person name="Sugawara M."/>
            <person name="Takahashi M."/>
            <person name="Kanda K."/>
            <person name="Yokoi T."/>
            <person name="Furuya T."/>
            <person name="Kikkawa E."/>
            <person name="Omura Y."/>
            <person name="Abe K."/>
            <person name="Kamihara K."/>
            <person name="Katsuta N."/>
            <person name="Sato K."/>
            <person name="Tanikawa M."/>
            <person name="Yamazaki M."/>
            <person name="Ninomiya K."/>
            <person name="Ishibashi T."/>
            <person name="Yamashita H."/>
            <person name="Murakawa K."/>
            <person name="Fujimori K."/>
            <person name="Tanai H."/>
            <person name="Kimata M."/>
            <person name="Watanabe M."/>
            <person name="Hiraoka S."/>
            <person name="Chiba Y."/>
            <person name="Ishida S."/>
            <person name="Ono Y."/>
            <person name="Takiguchi S."/>
            <person name="Watanabe S."/>
            <person name="Yosida M."/>
            <person name="Hotuta T."/>
            <person name="Kusano J."/>
            <person name="Kanehori K."/>
            <person name="Takahashi-Fujii A."/>
            <person name="Hara H."/>
            <person name="Tanase T.-O."/>
            <person name="Nomura Y."/>
            <person name="Togiya S."/>
            <person name="Komai F."/>
            <person name="Hara R."/>
            <person name="Takeuchi K."/>
            <person name="Arita M."/>
            <person name="Imose N."/>
            <person name="Musashino K."/>
            <person name="Yuuki H."/>
            <person name="Oshima A."/>
            <person name="Sasaki N."/>
            <person name="Aotsuka S."/>
            <person name="Yoshikawa Y."/>
            <person name="Matsunawa H."/>
            <person name="Ichihara T."/>
            <person name="Shiohata N."/>
            <person name="Sano S."/>
            <person name="Moriya S."/>
            <person name="Momiyama H."/>
            <person name="Satoh N."/>
            <person name="Takami S."/>
            <person name="Terashima Y."/>
            <person name="Suzuki O."/>
            <person name="Nakagawa S."/>
            <person name="Senoh A."/>
            <person name="Mizoguchi H."/>
            <person name="Goto Y."/>
            <person name="Shimizu F."/>
            <person name="Wakebe H."/>
            <person name="Hishigaki H."/>
            <person name="Watanabe T."/>
            <person name="Sugiyama A."/>
            <person name="Takemoto M."/>
            <person name="Kawakami B."/>
            <person name="Yamazaki M."/>
            <person name="Watanabe K."/>
            <person name="Kumagai A."/>
            <person name="Itakura S."/>
            <person name="Fukuzumi Y."/>
            <person name="Fujimori Y."/>
            <person name="Komiyama M."/>
            <person name="Tashiro H."/>
            <person name="Tanigami A."/>
            <person name="Fujiwara T."/>
            <person name="Ono T."/>
            <person name="Yamada K."/>
            <person name="Fujii Y."/>
            <person name="Ozaki K."/>
            <person name="Hirao M."/>
            <person name="Ohmori Y."/>
            <person name="Kawabata A."/>
            <person name="Hikiji T."/>
            <person name="Kobatake N."/>
            <person name="Inagaki H."/>
            <person name="Ikema Y."/>
            <person name="Okamoto S."/>
            <person name="Okitani R."/>
            <person name="Kawakami T."/>
            <person name="Noguchi S."/>
            <person name="Itoh T."/>
            <person name="Shigeta K."/>
            <person name="Senba T."/>
            <person name="Matsumura K."/>
            <person name="Nakajima Y."/>
            <person name="Mizuno T."/>
            <person name="Morinaga M."/>
            <person name="Sasaki M."/>
            <person name="Togashi T."/>
            <person name="Oyama M."/>
            <person name="Hata H."/>
            <person name="Watanabe M."/>
            <person name="Komatsu T."/>
            <person name="Mizushima-Sugano J."/>
            <person name="Satoh T."/>
            <person name="Shirai Y."/>
            <person name="Takahashi Y."/>
            <person name="Nakagawa K."/>
            <person name="Okumura K."/>
            <person name="Nagase T."/>
            <person name="Nomura N."/>
            <person name="Kikuchi H."/>
            <person name="Masuho Y."/>
            <person name="Yamashita R."/>
            <person name="Nakai K."/>
            <person name="Yada T."/>
            <person name="Nakamura Y."/>
            <person name="Ohara O."/>
            <person name="Isogai T."/>
            <person name="Sugano S."/>
        </authorList>
    </citation>
    <scope>NUCLEOTIDE SEQUENCE [LARGE SCALE MRNA]</scope>
    <scope>VARIANTS LEU-46 AND CYS-334</scope>
    <source>
        <tissue>Pericardium</tissue>
    </source>
</reference>
<reference key="5">
    <citation type="journal article" date="2006" name="Nature">
        <title>Human chromosome 11 DNA sequence and analysis including novel gene identification.</title>
        <authorList>
            <person name="Taylor T.D."/>
            <person name="Noguchi H."/>
            <person name="Totoki Y."/>
            <person name="Toyoda A."/>
            <person name="Kuroki Y."/>
            <person name="Dewar K."/>
            <person name="Lloyd C."/>
            <person name="Itoh T."/>
            <person name="Takeda T."/>
            <person name="Kim D.-W."/>
            <person name="She X."/>
            <person name="Barlow K.F."/>
            <person name="Bloom T."/>
            <person name="Bruford E."/>
            <person name="Chang J.L."/>
            <person name="Cuomo C.A."/>
            <person name="Eichler E."/>
            <person name="FitzGerald M.G."/>
            <person name="Jaffe D.B."/>
            <person name="LaButti K."/>
            <person name="Nicol R."/>
            <person name="Park H.-S."/>
            <person name="Seaman C."/>
            <person name="Sougnez C."/>
            <person name="Yang X."/>
            <person name="Zimmer A.R."/>
            <person name="Zody M.C."/>
            <person name="Birren B.W."/>
            <person name="Nusbaum C."/>
            <person name="Fujiyama A."/>
            <person name="Hattori M."/>
            <person name="Rogers J."/>
            <person name="Lander E.S."/>
            <person name="Sakaki Y."/>
        </authorList>
    </citation>
    <scope>NUCLEOTIDE SEQUENCE [LARGE SCALE GENOMIC DNA]</scope>
</reference>
<reference key="6">
    <citation type="submission" date="2005-07" db="EMBL/GenBank/DDBJ databases">
        <authorList>
            <person name="Mural R.J."/>
            <person name="Istrail S."/>
            <person name="Sutton G.G."/>
            <person name="Florea L."/>
            <person name="Halpern A.L."/>
            <person name="Mobarry C.M."/>
            <person name="Lippert R."/>
            <person name="Walenz B."/>
            <person name="Shatkay H."/>
            <person name="Dew I."/>
            <person name="Miller J.R."/>
            <person name="Flanigan M.J."/>
            <person name="Edwards N.J."/>
            <person name="Bolanos R."/>
            <person name="Fasulo D."/>
            <person name="Halldorsson B.V."/>
            <person name="Hannenhalli S."/>
            <person name="Turner R."/>
            <person name="Yooseph S."/>
            <person name="Lu F."/>
            <person name="Nusskern D.R."/>
            <person name="Shue B.C."/>
            <person name="Zheng X.H."/>
            <person name="Zhong F."/>
            <person name="Delcher A.L."/>
            <person name="Huson D.H."/>
            <person name="Kravitz S.A."/>
            <person name="Mouchard L."/>
            <person name="Reinert K."/>
            <person name="Remington K.A."/>
            <person name="Clark A.G."/>
            <person name="Waterman M.S."/>
            <person name="Eichler E.E."/>
            <person name="Adams M.D."/>
            <person name="Hunkapiller M.W."/>
            <person name="Myers E.W."/>
            <person name="Venter J.C."/>
        </authorList>
    </citation>
    <scope>NUCLEOTIDE SEQUENCE [LARGE SCALE GENOMIC DNA]</scope>
    <scope>VARIANTS LEU-46 AND CYS-334</scope>
</reference>
<reference key="7">
    <citation type="journal article" date="2004" name="Genome Res.">
        <title>The status, quality, and expansion of the NIH full-length cDNA project: the Mammalian Gene Collection (MGC).</title>
        <authorList>
            <consortium name="The MGC Project Team"/>
        </authorList>
    </citation>
    <scope>NUCLEOTIDE SEQUENCE [LARGE SCALE MRNA]</scope>
    <scope>VARIANTS LEU-46 AND SER-312</scope>
    <source>
        <tissue>Kidney</tissue>
        <tissue>Leukocyte</tissue>
    </source>
</reference>
<proteinExistence type="evidence at protein level"/>
<gene>
    <name type="primary">P2RY2</name>
    <name type="synonym">P2RU1</name>
</gene>
<name>P2RY2_HUMAN</name>
<feature type="chain" id="PRO_0000070013" description="P2Y purinoceptor 2">
    <location>
        <begin position="1"/>
        <end position="377"/>
    </location>
</feature>
<feature type="topological domain" description="Extracellular" evidence="1">
    <location>
        <begin position="1"/>
        <end position="32"/>
    </location>
</feature>
<feature type="transmembrane region" description="Helical; Name=1" evidence="1">
    <location>
        <begin position="33"/>
        <end position="59"/>
    </location>
</feature>
<feature type="topological domain" description="Cytoplasmic" evidence="1">
    <location>
        <begin position="60"/>
        <end position="70"/>
    </location>
</feature>
<feature type="transmembrane region" description="Helical; Name=2" evidence="1">
    <location>
        <begin position="71"/>
        <end position="93"/>
    </location>
</feature>
<feature type="topological domain" description="Extracellular" evidence="1">
    <location>
        <begin position="94"/>
        <end position="110"/>
    </location>
</feature>
<feature type="transmembrane region" description="Helical; Name=3" evidence="1">
    <location>
        <begin position="111"/>
        <end position="129"/>
    </location>
</feature>
<feature type="topological domain" description="Cytoplasmic" evidence="1">
    <location>
        <begin position="130"/>
        <end position="152"/>
    </location>
</feature>
<feature type="transmembrane region" description="Helical; Name=4" evidence="1">
    <location>
        <begin position="153"/>
        <end position="172"/>
    </location>
</feature>
<feature type="topological domain" description="Extracellular" evidence="1">
    <location>
        <begin position="173"/>
        <end position="194"/>
    </location>
</feature>
<feature type="transmembrane region" description="Helical; Name=5" evidence="1">
    <location>
        <begin position="195"/>
        <end position="220"/>
    </location>
</feature>
<feature type="topological domain" description="Cytoplasmic" evidence="1">
    <location>
        <begin position="221"/>
        <end position="246"/>
    </location>
</feature>
<feature type="transmembrane region" description="Helical; Name=6" evidence="1">
    <location>
        <begin position="247"/>
        <end position="269"/>
    </location>
</feature>
<feature type="topological domain" description="Extracellular" evidence="1">
    <location>
        <begin position="270"/>
        <end position="287"/>
    </location>
</feature>
<feature type="transmembrane region" description="Helical; Name=7" evidence="1">
    <location>
        <begin position="288"/>
        <end position="309"/>
    </location>
</feature>
<feature type="topological domain" description="Cytoplasmic" evidence="1">
    <location>
        <begin position="310"/>
        <end position="377"/>
    </location>
</feature>
<feature type="region of interest" description="Disordered" evidence="3">
    <location>
        <begin position="318"/>
        <end position="377"/>
    </location>
</feature>
<feature type="compositionally biased region" description="Basic and acidic residues" evidence="3">
    <location>
        <begin position="339"/>
        <end position="363"/>
    </location>
</feature>
<feature type="glycosylation site" description="N-linked (GlcNAc...) asparagine" evidence="1">
    <location>
        <position position="9"/>
    </location>
</feature>
<feature type="glycosylation site" description="N-linked (GlcNAc...) asparagine" evidence="1">
    <location>
        <position position="13"/>
    </location>
</feature>
<feature type="disulfide bond" evidence="2">
    <location>
        <begin position="106"/>
        <end position="183"/>
    </location>
</feature>
<feature type="sequence variant" id="VAR_054870" description="In dbSNP:rs2511241." evidence="4 5 6 7 8">
    <original>P</original>
    <variation>L</variation>
    <location>
        <position position="46"/>
    </location>
</feature>
<feature type="sequence variant" id="VAR_054871" description="In dbSNP:rs3741156." evidence="5">
    <original>R</original>
    <variation>S</variation>
    <location>
        <position position="312"/>
    </location>
</feature>
<feature type="sequence variant" id="VAR_054872" description="In dbSNP:rs1626154." evidence="4 8">
    <original>R</original>
    <variation>C</variation>
    <location>
        <position position="334"/>
    </location>
</feature>
<feature type="sequence conflict" description="In Ref. 1; AAC04923." evidence="9" ref="1">
    <original>E</original>
    <variation>G</variation>
    <location>
        <position position="350"/>
    </location>
</feature>
<feature type="sequence conflict" description="In Ref. 1; AAC04923." evidence="9" ref="1">
    <original>S</original>
    <variation>F</variation>
    <location>
        <position position="359"/>
    </location>
</feature>
<sequence length="377" mass="42273">MAADLGPWNDTINGTWDGDELGYRCRFNEDFKYVLLPVSYGVVCVPGLCLNAVALYIFLCRLKTWNASTTYMFHLAVSDALYAASLPLLVYYYARGDHWPFSTVLCKLVRFLFYTNLYCSILFLTCISVHRCLGVLRPLRSLRWGRARYARRVAGAVWVLVLACQAPVLYFVTTSARGGRVTCHDTSAPELFSRFVAYSSVMLGLLFAVPFAVILVCYVLMARRLLKPAYGTSGGLPRAKRKSVRTIAVVLAVFALCFLPFHVTRTLYYSFRSLDLSCHTLNAINMAYKVTRPLASANSCLDPVLYFLAGQRLVRFARDAKPPTGPSPATPARRRLGLRRSDRTDMQRIEDVLGSSEDSRRTESTPAGSENTKDIRL</sequence>
<keyword id="KW-1003">Cell membrane</keyword>
<keyword id="KW-1015">Disulfide bond</keyword>
<keyword id="KW-0297">G-protein coupled receptor</keyword>
<keyword id="KW-0325">Glycoprotein</keyword>
<keyword id="KW-0472">Membrane</keyword>
<keyword id="KW-1267">Proteomics identification</keyword>
<keyword id="KW-0675">Receptor</keyword>
<keyword id="KW-1185">Reference proteome</keyword>
<keyword id="KW-0807">Transducer</keyword>
<keyword id="KW-0812">Transmembrane</keyword>
<keyword id="KW-1133">Transmembrane helix</keyword>